<gene>
    <name type="primary">Fhl2</name>
</gene>
<reference key="1">
    <citation type="submission" date="1998-03" db="EMBL/GenBank/DDBJ databases">
        <title>The cloning, sequencing and characterization of a mouse FHL2, which contains four and a half LIM domains.</title>
        <authorList>
            <person name="Chan K.K."/>
            <person name="Tsui S.K.W."/>
            <person name="Lee C.Y."/>
            <person name="Fung K.P."/>
            <person name="Waye M.M.Y."/>
        </authorList>
    </citation>
    <scope>NUCLEOTIDE SEQUENCE [MRNA]</scope>
    <source>
        <strain>C57BL/6J</strain>
        <tissue>Brain</tissue>
    </source>
</reference>
<reference key="2">
    <citation type="journal article" date="1999" name="Biochem. Biophys. Res. Commun.">
        <title>The LIM proteins FHL1 and FHL3 are expressed differently in skeletal muscle.</title>
        <authorList>
            <person name="Morgan M.J."/>
            <person name="Madgwick A.J.A."/>
        </authorList>
    </citation>
    <scope>NUCLEOTIDE SEQUENCE [MRNA]</scope>
    <source>
        <tissue>Skeletal muscle</tissue>
    </source>
</reference>
<reference key="3">
    <citation type="journal article" date="2000" name="Mech. Dev.">
        <title>Expression patterns of FHL/SLIM family members suggest important functional roles in skeletal muscle and cardiovascular system.</title>
        <authorList>
            <person name="Chu P.-H."/>
            <person name="Ruiz-Lozano P."/>
            <person name="Zhou Q."/>
            <person name="Cai C."/>
            <person name="Chen J."/>
        </authorList>
    </citation>
    <scope>NUCLEOTIDE SEQUENCE [MRNA]</scope>
    <scope>TISSUE SPECIFICITY</scope>
</reference>
<reference key="4">
    <citation type="submission" date="1999-06" db="EMBL/GenBank/DDBJ databases">
        <title>Isolation of the mouse homolog mDRAL from skeletal muscle derived myoblasts.</title>
        <authorList>
            <person name="Starzinski-Powitz A."/>
            <person name="Martin B."/>
            <person name="Eckerdt F."/>
        </authorList>
    </citation>
    <scope>NUCLEOTIDE SEQUENCE [MRNA]</scope>
    <source>
        <strain>BALB/cJ</strain>
    </source>
</reference>
<reference key="5">
    <citation type="journal article" date="2010" name="Cell">
        <title>A tissue-specific atlas of mouse protein phosphorylation and expression.</title>
        <authorList>
            <person name="Huttlin E.L."/>
            <person name="Jedrychowski M.P."/>
            <person name="Elias J.E."/>
            <person name="Goswami T."/>
            <person name="Rad R."/>
            <person name="Beausoleil S.A."/>
            <person name="Villen J."/>
            <person name="Haas W."/>
            <person name="Sowa M.E."/>
            <person name="Gygi S.P."/>
        </authorList>
    </citation>
    <scope>IDENTIFICATION BY MASS SPECTROMETRY [LARGE SCALE ANALYSIS]</scope>
    <source>
        <tissue>Brain</tissue>
        <tissue>Heart</tissue>
        <tissue>Kidney</tissue>
        <tissue>Testis</tissue>
    </source>
</reference>
<reference key="6">
    <citation type="journal article" date="2010" name="Stem Cells">
        <title>Fhl2 interacts with Foxk1 and corepresses Foxo4 activity in myogenic progenitors.</title>
        <authorList>
            <person name="Shi X."/>
            <person name="Bowlin K.M."/>
            <person name="Garry D.J."/>
        </authorList>
    </citation>
    <scope>SUBCELLULAR LOCATION</scope>
    <scope>INTERACTION WITH FOXK1</scope>
</reference>
<reference key="7">
    <citation type="journal article" date="2012" name="Mol. Cell. Biol.">
        <title>FHL2 binds calcineurin and represses pathological cardiac growth.</title>
        <authorList>
            <person name="Hojayev B."/>
            <person name="Rothermel B.A."/>
            <person name="Gillette T.G."/>
            <person name="Hill J.A."/>
        </authorList>
    </citation>
    <scope>FUNCTION</scope>
    <scope>INDUCTION</scope>
    <scope>INTERACTION WITH CALCINEURIN</scope>
    <scope>SUBCELLULAR LOCATION</scope>
</reference>
<evidence type="ECO:0000250" key="1">
    <source>
        <dbReference type="UniProtKB" id="Q14192"/>
    </source>
</evidence>
<evidence type="ECO:0000255" key="2"/>
<evidence type="ECO:0000255" key="3">
    <source>
        <dbReference type="PROSITE-ProRule" id="PRU00125"/>
    </source>
</evidence>
<evidence type="ECO:0000269" key="4">
    <source>
    </source>
</evidence>
<evidence type="ECO:0000269" key="5">
    <source>
    </source>
</evidence>
<evidence type="ECO:0000269" key="6">
    <source>
    </source>
</evidence>
<organism>
    <name type="scientific">Mus musculus</name>
    <name type="common">Mouse</name>
    <dbReference type="NCBI Taxonomy" id="10090"/>
    <lineage>
        <taxon>Eukaryota</taxon>
        <taxon>Metazoa</taxon>
        <taxon>Chordata</taxon>
        <taxon>Craniata</taxon>
        <taxon>Vertebrata</taxon>
        <taxon>Euteleostomi</taxon>
        <taxon>Mammalia</taxon>
        <taxon>Eutheria</taxon>
        <taxon>Euarchontoglires</taxon>
        <taxon>Glires</taxon>
        <taxon>Rodentia</taxon>
        <taxon>Myomorpha</taxon>
        <taxon>Muroidea</taxon>
        <taxon>Muridae</taxon>
        <taxon>Murinae</taxon>
        <taxon>Mus</taxon>
        <taxon>Mus</taxon>
    </lineage>
</organism>
<feature type="chain" id="PRO_0000075738" description="Four and a half LIM domains protein 2">
    <location>
        <begin position="1"/>
        <end position="279"/>
    </location>
</feature>
<feature type="domain" description="LIM zinc-binding 1" evidence="3">
    <location>
        <begin position="40"/>
        <end position="92"/>
    </location>
</feature>
<feature type="domain" description="LIM zinc-binding 2" evidence="3">
    <location>
        <begin position="101"/>
        <end position="153"/>
    </location>
</feature>
<feature type="domain" description="LIM zinc-binding 3" evidence="3">
    <location>
        <begin position="162"/>
        <end position="212"/>
    </location>
</feature>
<feature type="domain" description="LIM zinc-binding 4" evidence="3">
    <location>
        <begin position="221"/>
        <end position="275"/>
    </location>
</feature>
<feature type="zinc finger region" description="C4-type" evidence="2">
    <location>
        <begin position="7"/>
        <end position="31"/>
    </location>
</feature>
<feature type="modified residue" description="Phosphoserine" evidence="1">
    <location>
        <position position="238"/>
    </location>
</feature>
<feature type="cross-link" description="Glycyl lysine isopeptide (Lys-Gly) (interchain with G-Cter in SUMO2)" evidence="1">
    <location>
        <position position="78"/>
    </location>
</feature>
<feature type="cross-link" description="Glycyl lysine isopeptide (Lys-Gly) (interchain with G-Cter in SUMO2)" evidence="1">
    <location>
        <position position="167"/>
    </location>
</feature>
<feature type="cross-link" description="Glycyl lysine isopeptide (Lys-Gly) (interchain with G-Cter in SUMO2)" evidence="1">
    <location>
        <position position="220"/>
    </location>
</feature>
<name>FHL2_MOUSE</name>
<keyword id="KW-0963">Cytoplasm</keyword>
<keyword id="KW-1017">Isopeptide bond</keyword>
<keyword id="KW-0440">LIM domain</keyword>
<keyword id="KW-0479">Metal-binding</keyword>
<keyword id="KW-0539">Nucleus</keyword>
<keyword id="KW-0597">Phosphoprotein</keyword>
<keyword id="KW-1185">Reference proteome</keyword>
<keyword id="KW-0677">Repeat</keyword>
<keyword id="KW-0804">Transcription</keyword>
<keyword id="KW-0805">Transcription regulation</keyword>
<keyword id="KW-0832">Ubl conjugation</keyword>
<keyword id="KW-0862">Zinc</keyword>
<keyword id="KW-0863">Zinc-finger</keyword>
<protein>
    <recommendedName>
        <fullName>Four and a half LIM domains protein 2</fullName>
        <shortName>FHL-2</shortName>
    </recommendedName>
    <alternativeName>
        <fullName>Skeletal muscle LIM-protein 3</fullName>
        <shortName>SLIM-3</shortName>
    </alternativeName>
</protein>
<dbReference type="EMBL" id="AF055889">
    <property type="protein sequence ID" value="AAC12770.1"/>
    <property type="molecule type" value="mRNA"/>
</dbReference>
<dbReference type="EMBL" id="U77040">
    <property type="protein sequence ID" value="AAB19211.2"/>
    <property type="molecule type" value="mRNA"/>
</dbReference>
<dbReference type="EMBL" id="AF114381">
    <property type="protein sequence ID" value="AAD53230.1"/>
    <property type="molecule type" value="mRNA"/>
</dbReference>
<dbReference type="EMBL" id="AF153340">
    <property type="protein sequence ID" value="AAD34170.1"/>
    <property type="molecule type" value="mRNA"/>
</dbReference>
<dbReference type="CCDS" id="CCDS14922.1"/>
<dbReference type="RefSeq" id="NP_001276462.1">
    <property type="nucleotide sequence ID" value="NM_001289533.2"/>
</dbReference>
<dbReference type="RefSeq" id="NP_001399527.1">
    <property type="nucleotide sequence ID" value="NM_001412598.1"/>
</dbReference>
<dbReference type="RefSeq" id="NP_034342.1">
    <property type="nucleotide sequence ID" value="NM_010212.5"/>
</dbReference>
<dbReference type="RefSeq" id="XP_011236736.1">
    <property type="nucleotide sequence ID" value="XM_011238434.2"/>
</dbReference>
<dbReference type="SMR" id="O70433"/>
<dbReference type="BioGRID" id="199669">
    <property type="interactions" value="11"/>
</dbReference>
<dbReference type="FunCoup" id="O70433">
    <property type="interactions" value="165"/>
</dbReference>
<dbReference type="IntAct" id="O70433">
    <property type="interactions" value="6"/>
</dbReference>
<dbReference type="MINT" id="O70433"/>
<dbReference type="STRING" id="10090.ENSMUSP00000008280"/>
<dbReference type="GlyGen" id="O70433">
    <property type="glycosylation" value="2 sites, 1 N-linked glycan (1 site), 1 O-linked glycan (1 site)"/>
</dbReference>
<dbReference type="iPTMnet" id="O70433"/>
<dbReference type="PhosphoSitePlus" id="O70433"/>
<dbReference type="SwissPalm" id="O70433"/>
<dbReference type="jPOST" id="O70433"/>
<dbReference type="PaxDb" id="10090-ENSMUSP00000008280"/>
<dbReference type="PeptideAtlas" id="O70433"/>
<dbReference type="ProteomicsDB" id="270988"/>
<dbReference type="Pumba" id="O70433"/>
<dbReference type="Antibodypedia" id="949">
    <property type="antibodies" value="359 antibodies from 37 providers"/>
</dbReference>
<dbReference type="DNASU" id="14200"/>
<dbReference type="Ensembl" id="ENSMUST00000008280.14">
    <property type="protein sequence ID" value="ENSMUSP00000008280.8"/>
    <property type="gene ID" value="ENSMUSG00000008136.15"/>
</dbReference>
<dbReference type="Ensembl" id="ENSMUST00000185893.2">
    <property type="protein sequence ID" value="ENSMUSP00000141170.2"/>
    <property type="gene ID" value="ENSMUSG00000008136.15"/>
</dbReference>
<dbReference type="GeneID" id="14200"/>
<dbReference type="KEGG" id="mmu:14200"/>
<dbReference type="UCSC" id="uc007avk.2">
    <property type="organism name" value="mouse"/>
</dbReference>
<dbReference type="AGR" id="MGI:1338762"/>
<dbReference type="CTD" id="2274"/>
<dbReference type="MGI" id="MGI:1338762">
    <property type="gene designation" value="Fhl2"/>
</dbReference>
<dbReference type="VEuPathDB" id="HostDB:ENSMUSG00000008136"/>
<dbReference type="eggNOG" id="KOG1704">
    <property type="taxonomic scope" value="Eukaryota"/>
</dbReference>
<dbReference type="GeneTree" id="ENSGT00950000183028"/>
<dbReference type="HOGENOM" id="CLU_001357_2_0_1"/>
<dbReference type="InParanoid" id="O70433"/>
<dbReference type="OMA" id="CYEQQYA"/>
<dbReference type="OrthoDB" id="274660at2759"/>
<dbReference type="PhylomeDB" id="O70433"/>
<dbReference type="TreeFam" id="TF321684"/>
<dbReference type="BioGRID-ORCS" id="14200">
    <property type="hits" value="2 hits in 79 CRISPR screens"/>
</dbReference>
<dbReference type="ChiTaRS" id="Fhl2">
    <property type="organism name" value="mouse"/>
</dbReference>
<dbReference type="PRO" id="PR:O70433"/>
<dbReference type="Proteomes" id="UP000000589">
    <property type="component" value="Chromosome 1"/>
</dbReference>
<dbReference type="RNAct" id="O70433">
    <property type="molecule type" value="protein"/>
</dbReference>
<dbReference type="Bgee" id="ENSMUSG00000008136">
    <property type="expression patterns" value="Expressed in heart right ventricle and 246 other cell types or tissues"/>
</dbReference>
<dbReference type="ExpressionAtlas" id="O70433">
    <property type="expression patterns" value="baseline and differential"/>
</dbReference>
<dbReference type="GO" id="GO:0005634">
    <property type="term" value="C:nucleus"/>
    <property type="evidence" value="ECO:0000314"/>
    <property type="project" value="MGI"/>
</dbReference>
<dbReference type="GO" id="GO:0030018">
    <property type="term" value="C:Z disc"/>
    <property type="evidence" value="ECO:0000314"/>
    <property type="project" value="UniProtKB"/>
</dbReference>
<dbReference type="GO" id="GO:0043425">
    <property type="term" value="F:bHLH transcription factor binding"/>
    <property type="evidence" value="ECO:0000353"/>
    <property type="project" value="BHF-UCL"/>
</dbReference>
<dbReference type="GO" id="GO:0042802">
    <property type="term" value="F:identical protein binding"/>
    <property type="evidence" value="ECO:0007669"/>
    <property type="project" value="Ensembl"/>
</dbReference>
<dbReference type="GO" id="GO:0003714">
    <property type="term" value="F:transcription corepressor activity"/>
    <property type="evidence" value="ECO:0000314"/>
    <property type="project" value="BHF-UCL"/>
</dbReference>
<dbReference type="GO" id="GO:0008134">
    <property type="term" value="F:transcription factor binding"/>
    <property type="evidence" value="ECO:0000250"/>
    <property type="project" value="UniProtKB"/>
</dbReference>
<dbReference type="GO" id="GO:0008270">
    <property type="term" value="F:zinc ion binding"/>
    <property type="evidence" value="ECO:0007669"/>
    <property type="project" value="UniProtKB-KW"/>
</dbReference>
<dbReference type="GO" id="GO:0055014">
    <property type="term" value="P:atrial cardiac muscle cell development"/>
    <property type="evidence" value="ECO:0000270"/>
    <property type="project" value="BHF-UCL"/>
</dbReference>
<dbReference type="GO" id="GO:0060347">
    <property type="term" value="P:heart trabecula formation"/>
    <property type="evidence" value="ECO:0000270"/>
    <property type="project" value="BHF-UCL"/>
</dbReference>
<dbReference type="GO" id="GO:0043066">
    <property type="term" value="P:negative regulation of apoptotic process"/>
    <property type="evidence" value="ECO:0000250"/>
    <property type="project" value="UniProtKB"/>
</dbReference>
<dbReference type="GO" id="GO:0070885">
    <property type="term" value="P:negative regulation of calcineurin-NFAT signaling cascade"/>
    <property type="evidence" value="ECO:0000315"/>
    <property type="project" value="UniProtKB"/>
</dbReference>
<dbReference type="GO" id="GO:0000122">
    <property type="term" value="P:negative regulation of transcription by RNA polymerase II"/>
    <property type="evidence" value="ECO:0000314"/>
    <property type="project" value="BHF-UCL"/>
</dbReference>
<dbReference type="GO" id="GO:0001649">
    <property type="term" value="P:osteoblast differentiation"/>
    <property type="evidence" value="ECO:0000270"/>
    <property type="project" value="BHF-UCL"/>
</dbReference>
<dbReference type="GO" id="GO:0006357">
    <property type="term" value="P:regulation of transcription by RNA polymerase II"/>
    <property type="evidence" value="ECO:0000314"/>
    <property type="project" value="MGI"/>
</dbReference>
<dbReference type="GO" id="GO:0009725">
    <property type="term" value="P:response to hormone"/>
    <property type="evidence" value="ECO:0007669"/>
    <property type="project" value="Ensembl"/>
</dbReference>
<dbReference type="GO" id="GO:0055015">
    <property type="term" value="P:ventricular cardiac muscle cell development"/>
    <property type="evidence" value="ECO:0000270"/>
    <property type="project" value="BHF-UCL"/>
</dbReference>
<dbReference type="CDD" id="cd09433">
    <property type="entry name" value="LIM4_FHL2"/>
    <property type="match status" value="1"/>
</dbReference>
<dbReference type="FunFam" id="2.10.110.10:FF:000013">
    <property type="entry name" value="Four and a half LIM domains 1"/>
    <property type="match status" value="1"/>
</dbReference>
<dbReference type="FunFam" id="2.10.110.10:FF:000030">
    <property type="entry name" value="Four and a half LIM domains protein 2"/>
    <property type="match status" value="1"/>
</dbReference>
<dbReference type="FunFam" id="2.10.110.10:FF:000048">
    <property type="entry name" value="Four and a half LIM domains protein 2"/>
    <property type="match status" value="1"/>
</dbReference>
<dbReference type="FunFam" id="2.10.110.10:FF:000049">
    <property type="entry name" value="Four and a half LIM domains protein 2"/>
    <property type="match status" value="1"/>
</dbReference>
<dbReference type="Gene3D" id="2.10.110.10">
    <property type="entry name" value="Cysteine Rich Protein"/>
    <property type="match status" value="4"/>
</dbReference>
<dbReference type="InterPro" id="IPR056807">
    <property type="entry name" value="LIM_FHL1/2/3/5_N"/>
</dbReference>
<dbReference type="InterPro" id="IPR001781">
    <property type="entry name" value="Znf_LIM"/>
</dbReference>
<dbReference type="PANTHER" id="PTHR24205">
    <property type="entry name" value="FOUR AND A HALF LIM DOMAINS PROTEIN"/>
    <property type="match status" value="1"/>
</dbReference>
<dbReference type="PANTHER" id="PTHR24205:SF3">
    <property type="entry name" value="FOUR AND A HALF LIM DOMAINS PROTEIN 2"/>
    <property type="match status" value="1"/>
</dbReference>
<dbReference type="Pfam" id="PF00412">
    <property type="entry name" value="LIM"/>
    <property type="match status" value="4"/>
</dbReference>
<dbReference type="Pfam" id="PF25076">
    <property type="entry name" value="LIM_FHL2-3_N"/>
    <property type="match status" value="1"/>
</dbReference>
<dbReference type="SMART" id="SM00132">
    <property type="entry name" value="LIM"/>
    <property type="match status" value="4"/>
</dbReference>
<dbReference type="SUPFAM" id="SSF57716">
    <property type="entry name" value="Glucocorticoid receptor-like (DNA-binding domain)"/>
    <property type="match status" value="5"/>
</dbReference>
<dbReference type="PROSITE" id="PS00478">
    <property type="entry name" value="LIM_DOMAIN_1"/>
    <property type="match status" value="4"/>
</dbReference>
<dbReference type="PROSITE" id="PS50023">
    <property type="entry name" value="LIM_DOMAIN_2"/>
    <property type="match status" value="4"/>
</dbReference>
<accession>O70433</accession>
<accession>P97448</accession>
<comment type="function">
    <text evidence="1 6">May function as a molecular transmitter linking various signaling pathways to transcriptional regulation. Negatively regulates the transcriptional repressor E4F1 and may function in cell growth. Inhibits the transcriptional activity of FOXO1 and its apoptotic function by enhancing the interaction of FOXO1 with SIRT1 and FOXO1 deacetylation (By similarity). Negatively regulates the calcineurin/NFAT signaling pathway in cardiomyocytes (PubMed:22851699).</text>
</comment>
<comment type="subunit">
    <text evidence="1 5 6">Interacts with ZNF638 and TTN/titin. Interacts with E4F1. Interacts with GRB7. Interacts with SIRT1 and FOXO1. Interacts with CEFIP (By similarity). Interacts with calcineurin (PubMed:22851699). Interacts with FOXK1 (PubMed:20013826).</text>
</comment>
<comment type="interaction">
    <interactant intactId="EBI-299379">
        <id>O70433</id>
    </interactant>
    <interactant intactId="EBI-617954">
        <id>Q8CIH5</id>
        <label>Plcg2</label>
    </interactant>
    <organismsDiffer>false</organismsDiffer>
    <experiments>3</experiments>
</comment>
<comment type="subcellular location">
    <subcellularLocation>
        <location evidence="1">Cytoplasm</location>
    </subcellularLocation>
    <subcellularLocation>
        <location evidence="5">Nucleus</location>
    </subcellularLocation>
    <subcellularLocation>
        <location evidence="6">Cytoplasm</location>
        <location evidence="6">Myofibril</location>
        <location evidence="6">Sarcomere</location>
        <location evidence="6">Z line</location>
    </subcellularLocation>
</comment>
<comment type="tissue specificity">
    <text evidence="4">Highly expressed in heart but also detectable in brain and skeletal muscle.</text>
</comment>
<comment type="induction">
    <text evidence="6">Up-regulated in hearts exposed to isoproterenol (at protein level).</text>
</comment>
<comment type="domain">
    <text evidence="1">The third LIM zinc-binding mediates interaction with E4F1.</text>
</comment>
<sequence length="279" mass="32073">MTERFDCHHCNESLYGKKYILKEENPHCVACFEELYANTCEECGTPIGCDCKDLSYKDRHWHEGCFHCSRCGSSLVDKPFAAKEEQLLCTDCYSNEYSSKCQECKKTIMPGTRKMEYKGSSWHETCFTCQRCQQPIGTKSFIPKENQNFCVPCYEKQYALQCVQCKKPITTGGVTYREQPWHKECFVCTACKKQLSGQRFTARDEFPYCLTCFCDLYAKKCAGCTNPISGLGGTKYISFEERQWHNDCFNCKKCSLSLVGRGFLTERDDILCPDCGKDI</sequence>
<proteinExistence type="evidence at protein level"/>